<accession>Q0CAF5</accession>
<sequence length="839" mass="91689">MTRLDVEKTIEELTLGEKVALTAGIDFWHTASVPRLNIPTLRMSDGPNGVRGTRFFNGVPAACFPCATALGATWDTELLHECGRLMGEESIAKGSHIILGPTINTQRSPLGGRGFESFAEDGVLSGNLAGYMSKGIQEKGVAATLKHFVCNDQEHERLAVDSIVTMRAMREIYLMPFQLAMRICPTACVMTAYNKVNGTHVSENKQIITDILRKEWGWDGLVMSDWFGTYSTSEAINAGLDLEMPGKTRWRSTPLAHAVSSNKVAEFVMDERVRNVLNLVNFVEPLGIPENCPEKALNRPQDQALLRRAAAESIVLMKNDDNILPLKKDKPILVIGPNAKIAAYCGGGSASLDPYYTVTPFEGVSAKSTGAVTFSQGVYSHKQLPELGPLMKSADGKKGFSFRVYKEPVSAPSRELVDELHLVSSSGFLMDYVHPKIDSLTFYVDMEGYFTPEEDGVYDFGVTVVGTGKLLIDGETVVDNTKNQRPGSAFFGTATVEEQGSKELKAGQTYKVVLEFGTAPTSDLDTRGVVVFGPGGFRFGASRRVSQEELIAKAADAAAQAEQVVIFAGLTSEWETEGHDRDHMDLPPGSDEMIQRVLAANPNTAVVIQSGTPVTMPWAAQTKALVQAWFGGNECGNGIADVLYGDVNPAGKLPLSFPVRLQDNPSYLNFRSERGRVLYGEDVYVGYRYYEKVNLAPLFPFGHGLSYTTFERSDLTLATVPEKPQYETAGEPITASVTVTNTGPVAGAEVVQLWVRPPPTGVNRPVRELKGFAKVMLNPGEQKRVDIVVEKKLATSWWDEQREMWASEKGQYEVQVTGTGADVLTSSFAVEKTRFWLGL</sequence>
<dbReference type="EC" id="3.2.1.21"/>
<dbReference type="EMBL" id="CH476607">
    <property type="protein sequence ID" value="EAU30466.1"/>
    <property type="molecule type" value="Genomic_DNA"/>
</dbReference>
<dbReference type="RefSeq" id="XP_001217951.1">
    <property type="nucleotide sequence ID" value="XM_001217950.1"/>
</dbReference>
<dbReference type="SMR" id="Q0CAF5"/>
<dbReference type="STRING" id="341663.Q0CAF5"/>
<dbReference type="GlyCosmos" id="Q0CAF5">
    <property type="glycosylation" value="1 site, No reported glycans"/>
</dbReference>
<dbReference type="EnsemblFungi" id="EAU30466">
    <property type="protein sequence ID" value="EAU30466"/>
    <property type="gene ID" value="ATEG_09329"/>
</dbReference>
<dbReference type="GeneID" id="4353962"/>
<dbReference type="VEuPathDB" id="FungiDB:ATEG_09329"/>
<dbReference type="eggNOG" id="ENOG502QR4D">
    <property type="taxonomic scope" value="Eukaryota"/>
</dbReference>
<dbReference type="HOGENOM" id="CLU_004542_4_0_1"/>
<dbReference type="OMA" id="QLWIVPP"/>
<dbReference type="OrthoDB" id="47059at2759"/>
<dbReference type="UniPathway" id="UPA00696"/>
<dbReference type="Proteomes" id="UP000007963">
    <property type="component" value="Unassembled WGS sequence"/>
</dbReference>
<dbReference type="GO" id="GO:0005576">
    <property type="term" value="C:extracellular region"/>
    <property type="evidence" value="ECO:0007669"/>
    <property type="project" value="UniProtKB-SubCell"/>
</dbReference>
<dbReference type="GO" id="GO:0008422">
    <property type="term" value="F:beta-glucosidase activity"/>
    <property type="evidence" value="ECO:0007669"/>
    <property type="project" value="UniProtKB-EC"/>
</dbReference>
<dbReference type="GO" id="GO:0030245">
    <property type="term" value="P:cellulose catabolic process"/>
    <property type="evidence" value="ECO:0007669"/>
    <property type="project" value="UniProtKB-UniPathway"/>
</dbReference>
<dbReference type="FunFam" id="3.20.20.300:FF:000006">
    <property type="entry name" value="Beta-glucosidase H"/>
    <property type="match status" value="1"/>
</dbReference>
<dbReference type="FunFam" id="2.60.40.10:FF:000495">
    <property type="entry name" value="Periplasmic beta-glucosidase"/>
    <property type="match status" value="1"/>
</dbReference>
<dbReference type="FunFam" id="2.60.120.260:FF:000119">
    <property type="entry name" value="Probable beta-glucosidase I"/>
    <property type="match status" value="1"/>
</dbReference>
<dbReference type="Gene3D" id="2.60.120.260">
    <property type="entry name" value="Galactose-binding domain-like"/>
    <property type="match status" value="1"/>
</dbReference>
<dbReference type="Gene3D" id="3.40.50.1700">
    <property type="entry name" value="Glycoside hydrolase family 3 C-terminal domain"/>
    <property type="match status" value="1"/>
</dbReference>
<dbReference type="Gene3D" id="3.20.20.300">
    <property type="entry name" value="Glycoside hydrolase, family 3, N-terminal domain"/>
    <property type="match status" value="1"/>
</dbReference>
<dbReference type="Gene3D" id="2.60.40.10">
    <property type="entry name" value="Immunoglobulins"/>
    <property type="match status" value="1"/>
</dbReference>
<dbReference type="InterPro" id="IPR050288">
    <property type="entry name" value="Cellulose_deg_GH3"/>
</dbReference>
<dbReference type="InterPro" id="IPR026891">
    <property type="entry name" value="Fn3-like"/>
</dbReference>
<dbReference type="InterPro" id="IPR019800">
    <property type="entry name" value="Glyco_hydro_3_AS"/>
</dbReference>
<dbReference type="InterPro" id="IPR002772">
    <property type="entry name" value="Glyco_hydro_3_C"/>
</dbReference>
<dbReference type="InterPro" id="IPR036881">
    <property type="entry name" value="Glyco_hydro_3_C_sf"/>
</dbReference>
<dbReference type="InterPro" id="IPR001764">
    <property type="entry name" value="Glyco_hydro_3_N"/>
</dbReference>
<dbReference type="InterPro" id="IPR036962">
    <property type="entry name" value="Glyco_hydro_3_N_sf"/>
</dbReference>
<dbReference type="InterPro" id="IPR017853">
    <property type="entry name" value="Glycoside_hydrolase_SF"/>
</dbReference>
<dbReference type="InterPro" id="IPR013783">
    <property type="entry name" value="Ig-like_fold"/>
</dbReference>
<dbReference type="InterPro" id="IPR037524">
    <property type="entry name" value="PA14/GLEYA"/>
</dbReference>
<dbReference type="InterPro" id="IPR011658">
    <property type="entry name" value="PA14_dom"/>
</dbReference>
<dbReference type="PANTHER" id="PTHR42715">
    <property type="entry name" value="BETA-GLUCOSIDASE"/>
    <property type="match status" value="1"/>
</dbReference>
<dbReference type="PANTHER" id="PTHR42715:SF27">
    <property type="entry name" value="BETA-GLUCOSIDASE-RELATED"/>
    <property type="match status" value="1"/>
</dbReference>
<dbReference type="Pfam" id="PF14310">
    <property type="entry name" value="Fn3-like"/>
    <property type="match status" value="1"/>
</dbReference>
<dbReference type="Pfam" id="PF00933">
    <property type="entry name" value="Glyco_hydro_3"/>
    <property type="match status" value="1"/>
</dbReference>
<dbReference type="Pfam" id="PF01915">
    <property type="entry name" value="Glyco_hydro_3_C"/>
    <property type="match status" value="1"/>
</dbReference>
<dbReference type="Pfam" id="PF07691">
    <property type="entry name" value="PA14"/>
    <property type="match status" value="1"/>
</dbReference>
<dbReference type="PRINTS" id="PR00133">
    <property type="entry name" value="GLHYDRLASE3"/>
</dbReference>
<dbReference type="SMART" id="SM01217">
    <property type="entry name" value="Fn3_like"/>
    <property type="match status" value="1"/>
</dbReference>
<dbReference type="SMART" id="SM00758">
    <property type="entry name" value="PA14"/>
    <property type="match status" value="1"/>
</dbReference>
<dbReference type="SUPFAM" id="SSF51445">
    <property type="entry name" value="(Trans)glycosidases"/>
    <property type="match status" value="1"/>
</dbReference>
<dbReference type="SUPFAM" id="SSF52279">
    <property type="entry name" value="Beta-D-glucan exohydrolase, C-terminal domain"/>
    <property type="match status" value="1"/>
</dbReference>
<dbReference type="PROSITE" id="PS00775">
    <property type="entry name" value="GLYCOSYL_HYDROL_F3"/>
    <property type="match status" value="1"/>
</dbReference>
<dbReference type="PROSITE" id="PS51820">
    <property type="entry name" value="PA14"/>
    <property type="match status" value="1"/>
</dbReference>
<gene>
    <name type="primary">bglI</name>
    <name type="ORF">ATEG_09329</name>
</gene>
<organism>
    <name type="scientific">Aspergillus terreus (strain NIH 2624 / FGSC A1156)</name>
    <dbReference type="NCBI Taxonomy" id="341663"/>
    <lineage>
        <taxon>Eukaryota</taxon>
        <taxon>Fungi</taxon>
        <taxon>Dikarya</taxon>
        <taxon>Ascomycota</taxon>
        <taxon>Pezizomycotina</taxon>
        <taxon>Eurotiomycetes</taxon>
        <taxon>Eurotiomycetidae</taxon>
        <taxon>Eurotiales</taxon>
        <taxon>Aspergillaceae</taxon>
        <taxon>Aspergillus</taxon>
        <taxon>Aspergillus subgen. Circumdati</taxon>
    </lineage>
</organism>
<name>BGLI_ASPTN</name>
<proteinExistence type="inferred from homology"/>
<protein>
    <recommendedName>
        <fullName>Probable beta-glucosidase I</fullName>
        <ecNumber>3.2.1.21</ecNumber>
    </recommendedName>
    <alternativeName>
        <fullName>Beta-D-glucoside glucohydrolase I</fullName>
    </alternativeName>
    <alternativeName>
        <fullName>Cellobiase I</fullName>
    </alternativeName>
    <alternativeName>
        <fullName>Gentiobiase I</fullName>
    </alternativeName>
</protein>
<keyword id="KW-0119">Carbohydrate metabolism</keyword>
<keyword id="KW-0136">Cellulose degradation</keyword>
<keyword id="KW-0325">Glycoprotein</keyword>
<keyword id="KW-0326">Glycosidase</keyword>
<keyword id="KW-0378">Hydrolase</keyword>
<keyword id="KW-0624">Polysaccharide degradation</keyword>
<keyword id="KW-1185">Reference proteome</keyword>
<keyword id="KW-0964">Secreted</keyword>
<comment type="function">
    <text evidence="1">Beta-glucosidases are one of a number of cellulolytic enzymes involved in the degradation of cellulosic biomass. Catalyzes the last step releasing glucose from the inhibitory cellobiose (By similarity).</text>
</comment>
<comment type="catalytic activity">
    <reaction>
        <text>Hydrolysis of terminal, non-reducing beta-D-glucosyl residues with release of beta-D-glucose.</text>
        <dbReference type="EC" id="3.2.1.21"/>
    </reaction>
</comment>
<comment type="pathway">
    <text>Glycan metabolism; cellulose degradation.</text>
</comment>
<comment type="subcellular location">
    <subcellularLocation>
        <location evidence="1">Secreted</location>
    </subcellularLocation>
</comment>
<comment type="similarity">
    <text evidence="4">Belongs to the glycosyl hydrolase 3 family.</text>
</comment>
<evidence type="ECO:0000250" key="1"/>
<evidence type="ECO:0000255" key="2"/>
<evidence type="ECO:0000255" key="3">
    <source>
        <dbReference type="PROSITE-ProRule" id="PRU01164"/>
    </source>
</evidence>
<evidence type="ECO:0000305" key="4"/>
<reference key="1">
    <citation type="submission" date="2005-09" db="EMBL/GenBank/DDBJ databases">
        <title>Annotation of the Aspergillus terreus NIH2624 genome.</title>
        <authorList>
            <person name="Birren B.W."/>
            <person name="Lander E.S."/>
            <person name="Galagan J.E."/>
            <person name="Nusbaum C."/>
            <person name="Devon K."/>
            <person name="Henn M."/>
            <person name="Ma L.-J."/>
            <person name="Jaffe D.B."/>
            <person name="Butler J."/>
            <person name="Alvarez P."/>
            <person name="Gnerre S."/>
            <person name="Grabherr M."/>
            <person name="Kleber M."/>
            <person name="Mauceli E.W."/>
            <person name="Brockman W."/>
            <person name="Rounsley S."/>
            <person name="Young S.K."/>
            <person name="LaButti K."/>
            <person name="Pushparaj V."/>
            <person name="DeCaprio D."/>
            <person name="Crawford M."/>
            <person name="Koehrsen M."/>
            <person name="Engels R."/>
            <person name="Montgomery P."/>
            <person name="Pearson M."/>
            <person name="Howarth C."/>
            <person name="Larson L."/>
            <person name="Luoma S."/>
            <person name="White J."/>
            <person name="Alvarado L."/>
            <person name="Kodira C.D."/>
            <person name="Zeng Q."/>
            <person name="Oleary S."/>
            <person name="Yandava C."/>
            <person name="Denning D.W."/>
            <person name="Nierman W.C."/>
            <person name="Milne T."/>
            <person name="Madden K."/>
        </authorList>
    </citation>
    <scope>NUCLEOTIDE SEQUENCE [LARGE SCALE GENOMIC DNA]</scope>
    <source>
        <strain>NIH 2624 / FGSC A1156</strain>
    </source>
</reference>
<feature type="chain" id="PRO_0000394889" description="Probable beta-glucosidase I">
    <location>
        <begin position="1"/>
        <end position="839"/>
    </location>
</feature>
<feature type="domain" description="PA14" evidence="3">
    <location>
        <begin position="395"/>
        <end position="555"/>
    </location>
</feature>
<feature type="active site" evidence="1">
    <location>
        <position position="225"/>
    </location>
</feature>
<feature type="glycosylation site" description="N-linked (GlcNAc...) asparagine" evidence="2">
    <location>
        <position position="197"/>
    </location>
</feature>